<gene>
    <name evidence="1" type="primary">mnmA</name>
    <name type="ordered locus">SPG_0123</name>
</gene>
<organism>
    <name type="scientific">Streptococcus pneumoniae serotype 19F (strain G54)</name>
    <dbReference type="NCBI Taxonomy" id="512566"/>
    <lineage>
        <taxon>Bacteria</taxon>
        <taxon>Bacillati</taxon>
        <taxon>Bacillota</taxon>
        <taxon>Bacilli</taxon>
        <taxon>Lactobacillales</taxon>
        <taxon>Streptococcaceae</taxon>
        <taxon>Streptococcus</taxon>
    </lineage>
</organism>
<proteinExistence type="inferred from homology"/>
<sequence length="373" mass="41590">MSDNSKTRVVVGMSGGVDSSVTALLLKEQGYDVIGIFMKNWDDTDENGVCTATEDYKDVVAVADQIGIPYYSVNFEKEYWDRVFEYXXAEYRAGRTPNPDVMCNKEIKFKAFLDYAMTLGADYVATGHYARVARDEDGTVHMLRGVDNGKDQTYFLSQLSQEQLQKTMFPLGHLEKPEVRKLAEEAGLSTAKKKDSTGICFIGEKNFKNFLSNYLPAQPGRMMTVDGRDMGEHAGLMYYTIGQRGGLGIGGQHGGDNAPWFVVGKDLSKNILYVGQGFYHDSLMSTSLEASQVHFTREMPEEFTLECTAKFRYRQPDSKVTVHVKGDKAEVIFAEPQRAITPGQAVVFYDGEECLGGGLIDNAYRDGQVCQYI</sequence>
<name>MNMA_STRP4</name>
<keyword id="KW-0067">ATP-binding</keyword>
<keyword id="KW-0963">Cytoplasm</keyword>
<keyword id="KW-1015">Disulfide bond</keyword>
<keyword id="KW-0547">Nucleotide-binding</keyword>
<keyword id="KW-0694">RNA-binding</keyword>
<keyword id="KW-0808">Transferase</keyword>
<keyword id="KW-0819">tRNA processing</keyword>
<keyword id="KW-0820">tRNA-binding</keyword>
<comment type="function">
    <text evidence="1">Catalyzes the 2-thiolation of uridine at the wobble position (U34) of tRNA, leading to the formation of s(2)U34.</text>
</comment>
<comment type="catalytic activity">
    <reaction evidence="1">
        <text>S-sulfanyl-L-cysteinyl-[protein] + uridine(34) in tRNA + AH2 + ATP = 2-thiouridine(34) in tRNA + L-cysteinyl-[protein] + A + AMP + diphosphate + H(+)</text>
        <dbReference type="Rhea" id="RHEA:47032"/>
        <dbReference type="Rhea" id="RHEA-COMP:10131"/>
        <dbReference type="Rhea" id="RHEA-COMP:11726"/>
        <dbReference type="Rhea" id="RHEA-COMP:11727"/>
        <dbReference type="Rhea" id="RHEA-COMP:11728"/>
        <dbReference type="ChEBI" id="CHEBI:13193"/>
        <dbReference type="ChEBI" id="CHEBI:15378"/>
        <dbReference type="ChEBI" id="CHEBI:17499"/>
        <dbReference type="ChEBI" id="CHEBI:29950"/>
        <dbReference type="ChEBI" id="CHEBI:30616"/>
        <dbReference type="ChEBI" id="CHEBI:33019"/>
        <dbReference type="ChEBI" id="CHEBI:61963"/>
        <dbReference type="ChEBI" id="CHEBI:65315"/>
        <dbReference type="ChEBI" id="CHEBI:87170"/>
        <dbReference type="ChEBI" id="CHEBI:456215"/>
        <dbReference type="EC" id="2.8.1.13"/>
    </reaction>
</comment>
<comment type="subcellular location">
    <subcellularLocation>
        <location evidence="1">Cytoplasm</location>
    </subcellularLocation>
</comment>
<comment type="similarity">
    <text evidence="1">Belongs to the MnmA/TRMU family.</text>
</comment>
<feature type="chain" id="PRO_1000096306" description="tRNA-specific 2-thiouridylase MnmA">
    <location>
        <begin position="1"/>
        <end position="373"/>
    </location>
</feature>
<feature type="region of interest" description="Interaction with target base in tRNA" evidence="1">
    <location>
        <begin position="98"/>
        <end position="100"/>
    </location>
</feature>
<feature type="region of interest" description="Interaction with tRNA" evidence="1">
    <location>
        <begin position="150"/>
        <end position="152"/>
    </location>
</feature>
<feature type="region of interest" description="Interaction with tRNA" evidence="1">
    <location>
        <begin position="312"/>
        <end position="313"/>
    </location>
</feature>
<feature type="active site" description="Nucleophile" evidence="1">
    <location>
        <position position="103"/>
    </location>
</feature>
<feature type="active site" description="Cysteine persulfide intermediate" evidence="1">
    <location>
        <position position="200"/>
    </location>
</feature>
<feature type="binding site" evidence="1">
    <location>
        <begin position="12"/>
        <end position="19"/>
    </location>
    <ligand>
        <name>ATP</name>
        <dbReference type="ChEBI" id="CHEBI:30616"/>
    </ligand>
</feature>
<feature type="binding site" evidence="1">
    <location>
        <position position="38"/>
    </location>
    <ligand>
        <name>ATP</name>
        <dbReference type="ChEBI" id="CHEBI:30616"/>
    </ligand>
</feature>
<feature type="binding site" evidence="1">
    <location>
        <position position="127"/>
    </location>
    <ligand>
        <name>ATP</name>
        <dbReference type="ChEBI" id="CHEBI:30616"/>
    </ligand>
</feature>
<feature type="site" description="Interaction with tRNA" evidence="1">
    <location>
        <position position="128"/>
    </location>
</feature>
<feature type="site" description="Interaction with tRNA" evidence="1">
    <location>
        <position position="344"/>
    </location>
</feature>
<feature type="disulfide bond" description="Alternate" evidence="1">
    <location>
        <begin position="103"/>
        <end position="200"/>
    </location>
</feature>
<reference key="1">
    <citation type="journal article" date="2001" name="Microb. Drug Resist.">
        <title>Annotated draft genomic sequence from a Streptococcus pneumoniae type 19F clinical isolate.</title>
        <authorList>
            <person name="Dopazo J."/>
            <person name="Mendoza A."/>
            <person name="Herrero J."/>
            <person name="Caldara F."/>
            <person name="Humbert Y."/>
            <person name="Friedli L."/>
            <person name="Guerrier M."/>
            <person name="Grand-Schenk E."/>
            <person name="Gandin C."/>
            <person name="de Francesco M."/>
            <person name="Polissi A."/>
            <person name="Buell G."/>
            <person name="Feger G."/>
            <person name="Garcia E."/>
            <person name="Peitsch M."/>
            <person name="Garcia-Bustos J.F."/>
        </authorList>
    </citation>
    <scope>NUCLEOTIDE SEQUENCE [LARGE SCALE GENOMIC DNA]</scope>
    <source>
        <strain>G54</strain>
    </source>
</reference>
<reference key="2">
    <citation type="submission" date="2008-03" db="EMBL/GenBank/DDBJ databases">
        <title>Pneumococcal beta glucoside metabolism investigated by whole genome comparison.</title>
        <authorList>
            <person name="Mulas L."/>
            <person name="Trappetti C."/>
            <person name="Hakenbeck R."/>
            <person name="Iannelli F."/>
            <person name="Pozzi G."/>
            <person name="Davidsen T.M."/>
            <person name="Tettelin H."/>
            <person name="Oggioni M."/>
        </authorList>
    </citation>
    <scope>NUCLEOTIDE SEQUENCE [LARGE SCALE GENOMIC DNA]</scope>
    <source>
        <strain>G54</strain>
    </source>
</reference>
<dbReference type="EC" id="2.8.1.13" evidence="1"/>
<dbReference type="EMBL" id="CP001015">
    <property type="protein sequence ID" value="ACF56520.1"/>
    <property type="molecule type" value="Genomic_DNA"/>
</dbReference>
<dbReference type="KEGG" id="spx:SPG_0123"/>
<dbReference type="HOGENOM" id="CLU_035188_1_0_9"/>
<dbReference type="GO" id="GO:0005737">
    <property type="term" value="C:cytoplasm"/>
    <property type="evidence" value="ECO:0007669"/>
    <property type="project" value="UniProtKB-SubCell"/>
</dbReference>
<dbReference type="GO" id="GO:0005524">
    <property type="term" value="F:ATP binding"/>
    <property type="evidence" value="ECO:0007669"/>
    <property type="project" value="UniProtKB-KW"/>
</dbReference>
<dbReference type="GO" id="GO:0000049">
    <property type="term" value="F:tRNA binding"/>
    <property type="evidence" value="ECO:0007669"/>
    <property type="project" value="UniProtKB-KW"/>
</dbReference>
<dbReference type="GO" id="GO:0103016">
    <property type="term" value="F:tRNA-uridine 2-sulfurtransferase activity"/>
    <property type="evidence" value="ECO:0007669"/>
    <property type="project" value="UniProtKB-EC"/>
</dbReference>
<dbReference type="GO" id="GO:0002143">
    <property type="term" value="P:tRNA wobble position uridine thiolation"/>
    <property type="evidence" value="ECO:0007669"/>
    <property type="project" value="TreeGrafter"/>
</dbReference>
<dbReference type="CDD" id="cd01998">
    <property type="entry name" value="MnmA_TRMU-like"/>
    <property type="match status" value="1"/>
</dbReference>
<dbReference type="FunFam" id="2.30.30.280:FF:000001">
    <property type="entry name" value="tRNA-specific 2-thiouridylase MnmA"/>
    <property type="match status" value="1"/>
</dbReference>
<dbReference type="FunFam" id="2.40.30.10:FF:000023">
    <property type="entry name" value="tRNA-specific 2-thiouridylase MnmA"/>
    <property type="match status" value="1"/>
</dbReference>
<dbReference type="FunFam" id="3.40.50.620:FF:000004">
    <property type="entry name" value="tRNA-specific 2-thiouridylase MnmA"/>
    <property type="match status" value="1"/>
</dbReference>
<dbReference type="Gene3D" id="2.30.30.280">
    <property type="entry name" value="Adenine nucleotide alpha hydrolases-like domains"/>
    <property type="match status" value="1"/>
</dbReference>
<dbReference type="Gene3D" id="3.40.50.620">
    <property type="entry name" value="HUPs"/>
    <property type="match status" value="1"/>
</dbReference>
<dbReference type="Gene3D" id="2.40.30.10">
    <property type="entry name" value="Translation factors"/>
    <property type="match status" value="1"/>
</dbReference>
<dbReference type="HAMAP" id="MF_00144">
    <property type="entry name" value="tRNA_thiouridyl_MnmA"/>
    <property type="match status" value="1"/>
</dbReference>
<dbReference type="InterPro" id="IPR004506">
    <property type="entry name" value="MnmA-like"/>
</dbReference>
<dbReference type="InterPro" id="IPR046885">
    <property type="entry name" value="MnmA-like_C"/>
</dbReference>
<dbReference type="InterPro" id="IPR046884">
    <property type="entry name" value="MnmA-like_central"/>
</dbReference>
<dbReference type="InterPro" id="IPR023382">
    <property type="entry name" value="MnmA-like_central_sf"/>
</dbReference>
<dbReference type="InterPro" id="IPR014729">
    <property type="entry name" value="Rossmann-like_a/b/a_fold"/>
</dbReference>
<dbReference type="NCBIfam" id="NF001138">
    <property type="entry name" value="PRK00143.1"/>
    <property type="match status" value="1"/>
</dbReference>
<dbReference type="NCBIfam" id="TIGR00420">
    <property type="entry name" value="trmU"/>
    <property type="match status" value="1"/>
</dbReference>
<dbReference type="PANTHER" id="PTHR11933:SF5">
    <property type="entry name" value="MITOCHONDRIAL TRNA-SPECIFIC 2-THIOURIDYLASE 1"/>
    <property type="match status" value="1"/>
</dbReference>
<dbReference type="PANTHER" id="PTHR11933">
    <property type="entry name" value="TRNA 5-METHYLAMINOMETHYL-2-THIOURIDYLATE -METHYLTRANSFERASE"/>
    <property type="match status" value="1"/>
</dbReference>
<dbReference type="Pfam" id="PF03054">
    <property type="entry name" value="tRNA_Me_trans"/>
    <property type="match status" value="1"/>
</dbReference>
<dbReference type="Pfam" id="PF20258">
    <property type="entry name" value="tRNA_Me_trans_C"/>
    <property type="match status" value="1"/>
</dbReference>
<dbReference type="Pfam" id="PF20259">
    <property type="entry name" value="tRNA_Me_trans_M"/>
    <property type="match status" value="1"/>
</dbReference>
<dbReference type="SUPFAM" id="SSF52402">
    <property type="entry name" value="Adenine nucleotide alpha hydrolases-like"/>
    <property type="match status" value="1"/>
</dbReference>
<evidence type="ECO:0000255" key="1">
    <source>
        <dbReference type="HAMAP-Rule" id="MF_00144"/>
    </source>
</evidence>
<accession>B5E605</accession>
<protein>
    <recommendedName>
        <fullName evidence="1">tRNA-specific 2-thiouridylase MnmA</fullName>
        <ecNumber evidence="1">2.8.1.13</ecNumber>
    </recommendedName>
</protein>